<dbReference type="TCDB" id="1.C.16.1.6">
    <property type="family name" value="the magainin (magainin) family"/>
</dbReference>
<dbReference type="GO" id="GO:0005576">
    <property type="term" value="C:extracellular region"/>
    <property type="evidence" value="ECO:0007669"/>
    <property type="project" value="UniProtKB-SubCell"/>
</dbReference>
<dbReference type="GO" id="GO:0006952">
    <property type="term" value="P:defense response"/>
    <property type="evidence" value="ECO:0007669"/>
    <property type="project" value="UniProtKB-KW"/>
</dbReference>
<protein>
    <recommendedName>
        <fullName evidence="3">Magainin-R2</fullName>
    </recommendedName>
</protein>
<feature type="peptide" id="PRO_0000440924" description="Magainin-R2" evidence="2">
    <location>
        <begin position="1"/>
        <end position="23"/>
    </location>
</feature>
<sequence length="23" mass="2419">GIKEFAHSLGKFGKAFVGGILNQ</sequence>
<name>MAGR2_XENRU</name>
<comment type="function">
    <text evidence="1">Antimicrobial peptide.</text>
</comment>
<comment type="subcellular location">
    <subcellularLocation>
        <location evidence="2">Secreted</location>
    </subcellularLocation>
</comment>
<comment type="tissue specificity">
    <text evidence="5">Expressed by the skin glands.</text>
</comment>
<comment type="mass spectrometry" mass="2418.1" method="MALDI" evidence="2"/>
<comment type="similarity">
    <text evidence="4">Belongs to the gastrin/cholecystokinin family. Magainin subfamily.</text>
</comment>
<keyword id="KW-0878">Amphibian defense peptide</keyword>
<keyword id="KW-0929">Antimicrobial</keyword>
<keyword id="KW-0903">Direct protein sequencing</keyword>
<keyword id="KW-0964">Secreted</keyword>
<organism evidence="3">
    <name type="scientific">Xenopus ruwenzoriensis</name>
    <name type="common">Uganda clawed frog</name>
    <dbReference type="NCBI Taxonomy" id="105430"/>
    <lineage>
        <taxon>Eukaryota</taxon>
        <taxon>Metazoa</taxon>
        <taxon>Chordata</taxon>
        <taxon>Craniata</taxon>
        <taxon>Vertebrata</taxon>
        <taxon>Euteleostomi</taxon>
        <taxon>Amphibia</taxon>
        <taxon>Batrachia</taxon>
        <taxon>Anura</taxon>
        <taxon>Pipoidea</taxon>
        <taxon>Pipidae</taxon>
        <taxon>Xenopodinae</taxon>
        <taxon>Xenopus</taxon>
        <taxon>Xenopus</taxon>
    </lineage>
</organism>
<reference evidence="4" key="1">
    <citation type="journal article" date="2016" name="Comp. Biochem. Physiol.">
        <title>Peptidomic analysis of the extensive array of host-defense peptides in skin secretions of the dodecaploid frog Xenopus ruwenzoriensis (Pipidae).</title>
        <authorList>
            <person name="Coquet L."/>
            <person name="Kolodziejek J."/>
            <person name="Jouenne T."/>
            <person name="Nowotny N."/>
            <person name="King J.D."/>
            <person name="Conlon J.M."/>
        </authorList>
    </citation>
    <scope>PROTEIN SEQUENCE</scope>
    <scope>SUBCELLULAR LOCATION</scope>
    <scope>MASS SPECTROMETRY</scope>
    <source>
        <tissue evidence="3">Skin secretion</tissue>
    </source>
</reference>
<accession>C0HKN7</accession>
<evidence type="ECO:0000250" key="1">
    <source>
        <dbReference type="UniProtKB" id="C0HK84"/>
    </source>
</evidence>
<evidence type="ECO:0000269" key="2">
    <source>
    </source>
</evidence>
<evidence type="ECO:0000303" key="3">
    <source>
    </source>
</evidence>
<evidence type="ECO:0000305" key="4"/>
<evidence type="ECO:0000305" key="5">
    <source>
    </source>
</evidence>
<proteinExistence type="evidence at protein level"/>